<organism>
    <name type="scientific">Anaplasma phagocytophilum (strain HZ)</name>
    <dbReference type="NCBI Taxonomy" id="212042"/>
    <lineage>
        <taxon>Bacteria</taxon>
        <taxon>Pseudomonadati</taxon>
        <taxon>Pseudomonadota</taxon>
        <taxon>Alphaproteobacteria</taxon>
        <taxon>Rickettsiales</taxon>
        <taxon>Anaplasmataceae</taxon>
        <taxon>Anaplasma</taxon>
        <taxon>phagocytophilum group</taxon>
    </lineage>
</organism>
<sequence>MDHEDMIKVDASVRERCGTGSARALRARGLIPAVIYGKNRDPINISLSQVDFLKKCRTFPIFSKLIELCIGEKKEYVITKDIQKHPVSGAIAHVDFQFVDQDAEMKMEVPLVFLNEQKCVGVKRGGVINILHRSLIIRCSPHHIPKSLEVDLIDVAIGHSLHVSDLKLPSTINVVMKEEDPVIATVVASGGGISEDAEEAAPASDIPEAGK</sequence>
<gene>
    <name evidence="1" type="primary">rplY</name>
    <name evidence="1" type="synonym">ctc</name>
    <name type="ordered locus">APH_1302</name>
</gene>
<proteinExistence type="inferred from homology"/>
<reference key="1">
    <citation type="journal article" date="2006" name="PLoS Genet.">
        <title>Comparative genomics of emerging human ehrlichiosis agents.</title>
        <authorList>
            <person name="Dunning Hotopp J.C."/>
            <person name="Lin M."/>
            <person name="Madupu R."/>
            <person name="Crabtree J."/>
            <person name="Angiuoli S.V."/>
            <person name="Eisen J.A."/>
            <person name="Seshadri R."/>
            <person name="Ren Q."/>
            <person name="Wu M."/>
            <person name="Utterback T.R."/>
            <person name="Smith S."/>
            <person name="Lewis M."/>
            <person name="Khouri H."/>
            <person name="Zhang C."/>
            <person name="Niu H."/>
            <person name="Lin Q."/>
            <person name="Ohashi N."/>
            <person name="Zhi N."/>
            <person name="Nelson W.C."/>
            <person name="Brinkac L.M."/>
            <person name="Dodson R.J."/>
            <person name="Rosovitz M.J."/>
            <person name="Sundaram J.P."/>
            <person name="Daugherty S.C."/>
            <person name="Davidsen T."/>
            <person name="Durkin A.S."/>
            <person name="Gwinn M.L."/>
            <person name="Haft D.H."/>
            <person name="Selengut J.D."/>
            <person name="Sullivan S.A."/>
            <person name="Zafar N."/>
            <person name="Zhou L."/>
            <person name="Benahmed F."/>
            <person name="Forberger H."/>
            <person name="Halpin R."/>
            <person name="Mulligan S."/>
            <person name="Robinson J."/>
            <person name="White O."/>
            <person name="Rikihisa Y."/>
            <person name="Tettelin H."/>
        </authorList>
    </citation>
    <scope>NUCLEOTIDE SEQUENCE [LARGE SCALE GENOMIC DNA]</scope>
    <source>
        <strain>HZ</strain>
    </source>
</reference>
<keyword id="KW-0687">Ribonucleoprotein</keyword>
<keyword id="KW-0689">Ribosomal protein</keyword>
<keyword id="KW-0694">RNA-binding</keyword>
<keyword id="KW-0699">rRNA-binding</keyword>
<comment type="function">
    <text evidence="1">This is one of the proteins that binds to the 5S RNA in the ribosome where it forms part of the central protuberance.</text>
</comment>
<comment type="subunit">
    <text evidence="1">Part of the 50S ribosomal subunit; part of the 5S rRNA/L5/L18/L25 subcomplex. Contacts the 5S rRNA. Binds to the 5S rRNA independently of L5 and L18.</text>
</comment>
<comment type="similarity">
    <text evidence="1">Belongs to the bacterial ribosomal protein bL25 family. CTC subfamily.</text>
</comment>
<protein>
    <recommendedName>
        <fullName evidence="1">Large ribosomal subunit protein bL25</fullName>
    </recommendedName>
    <alternativeName>
        <fullName evidence="2">50S ribosomal protein L25</fullName>
    </alternativeName>
    <alternativeName>
        <fullName evidence="1">General stress protein CTC</fullName>
    </alternativeName>
</protein>
<evidence type="ECO:0000255" key="1">
    <source>
        <dbReference type="HAMAP-Rule" id="MF_01334"/>
    </source>
</evidence>
<evidence type="ECO:0000305" key="2"/>
<feature type="chain" id="PRO_0000244191" description="Large ribosomal subunit protein bL25">
    <location>
        <begin position="1"/>
        <end position="211"/>
    </location>
</feature>
<dbReference type="EMBL" id="CP000235">
    <property type="protein sequence ID" value="ABD43960.1"/>
    <property type="molecule type" value="Genomic_DNA"/>
</dbReference>
<dbReference type="RefSeq" id="WP_011451323.1">
    <property type="nucleotide sequence ID" value="NC_007797.1"/>
</dbReference>
<dbReference type="SMR" id="Q2GII5"/>
<dbReference type="STRING" id="212042.APH_1302"/>
<dbReference type="PaxDb" id="212042-APH_1302"/>
<dbReference type="EnsemblBacteria" id="ABD43960">
    <property type="protein sequence ID" value="ABD43960"/>
    <property type="gene ID" value="APH_1302"/>
</dbReference>
<dbReference type="GeneID" id="92747825"/>
<dbReference type="KEGG" id="aph:APH_1302"/>
<dbReference type="eggNOG" id="COG1825">
    <property type="taxonomic scope" value="Bacteria"/>
</dbReference>
<dbReference type="HOGENOM" id="CLU_075939_0_1_5"/>
<dbReference type="Proteomes" id="UP000001943">
    <property type="component" value="Chromosome"/>
</dbReference>
<dbReference type="GO" id="GO:0022625">
    <property type="term" value="C:cytosolic large ribosomal subunit"/>
    <property type="evidence" value="ECO:0007669"/>
    <property type="project" value="TreeGrafter"/>
</dbReference>
<dbReference type="GO" id="GO:0008097">
    <property type="term" value="F:5S rRNA binding"/>
    <property type="evidence" value="ECO:0007669"/>
    <property type="project" value="InterPro"/>
</dbReference>
<dbReference type="GO" id="GO:0003735">
    <property type="term" value="F:structural constituent of ribosome"/>
    <property type="evidence" value="ECO:0007669"/>
    <property type="project" value="InterPro"/>
</dbReference>
<dbReference type="GO" id="GO:0006412">
    <property type="term" value="P:translation"/>
    <property type="evidence" value="ECO:0007669"/>
    <property type="project" value="UniProtKB-UniRule"/>
</dbReference>
<dbReference type="CDD" id="cd00495">
    <property type="entry name" value="Ribosomal_L25_TL5_CTC"/>
    <property type="match status" value="1"/>
</dbReference>
<dbReference type="Gene3D" id="2.170.120.20">
    <property type="entry name" value="Ribosomal protein L25, beta domain"/>
    <property type="match status" value="1"/>
</dbReference>
<dbReference type="Gene3D" id="2.40.240.10">
    <property type="entry name" value="Ribosomal Protein L25, Chain P"/>
    <property type="match status" value="1"/>
</dbReference>
<dbReference type="HAMAP" id="MF_01334">
    <property type="entry name" value="Ribosomal_bL25_CTC"/>
    <property type="match status" value="1"/>
</dbReference>
<dbReference type="InterPro" id="IPR020056">
    <property type="entry name" value="Rbsml_bL25/Gln-tRNA_synth_N"/>
</dbReference>
<dbReference type="InterPro" id="IPR011035">
    <property type="entry name" value="Ribosomal_bL25/Gln-tRNA_synth"/>
</dbReference>
<dbReference type="InterPro" id="IPR020057">
    <property type="entry name" value="Ribosomal_bL25_b-dom"/>
</dbReference>
<dbReference type="InterPro" id="IPR037121">
    <property type="entry name" value="Ribosomal_bL25_C"/>
</dbReference>
<dbReference type="InterPro" id="IPR001021">
    <property type="entry name" value="Ribosomal_bL25_long"/>
</dbReference>
<dbReference type="InterPro" id="IPR029751">
    <property type="entry name" value="Ribosomal_L25_dom"/>
</dbReference>
<dbReference type="InterPro" id="IPR020930">
    <property type="entry name" value="Ribosomal_uL5_bac-type"/>
</dbReference>
<dbReference type="NCBIfam" id="TIGR00731">
    <property type="entry name" value="bL25_bact_ctc"/>
    <property type="match status" value="1"/>
</dbReference>
<dbReference type="NCBIfam" id="NF004128">
    <property type="entry name" value="PRK05618.1-2"/>
    <property type="match status" value="1"/>
</dbReference>
<dbReference type="NCBIfam" id="NF004612">
    <property type="entry name" value="PRK05943.1"/>
    <property type="match status" value="1"/>
</dbReference>
<dbReference type="PANTHER" id="PTHR33284">
    <property type="entry name" value="RIBOSOMAL PROTEIN L25/GLN-TRNA SYNTHETASE, ANTI-CODON-BINDING DOMAIN-CONTAINING PROTEIN"/>
    <property type="match status" value="1"/>
</dbReference>
<dbReference type="PANTHER" id="PTHR33284:SF1">
    <property type="entry name" value="RIBOSOMAL PROTEIN L25_GLN-TRNA SYNTHETASE, ANTI-CODON-BINDING DOMAIN-CONTAINING PROTEIN"/>
    <property type="match status" value="1"/>
</dbReference>
<dbReference type="Pfam" id="PF01386">
    <property type="entry name" value="Ribosomal_L25p"/>
    <property type="match status" value="1"/>
</dbReference>
<dbReference type="Pfam" id="PF14693">
    <property type="entry name" value="Ribosomal_TL5_C"/>
    <property type="match status" value="1"/>
</dbReference>
<dbReference type="SUPFAM" id="SSF50715">
    <property type="entry name" value="Ribosomal protein L25-like"/>
    <property type="match status" value="1"/>
</dbReference>
<name>RL25_ANAPZ</name>
<accession>Q2GII5</accession>